<sequence length="328" mass="38195">MSEKIRVLLYYKYVSIENAQEYAAKHLEFCKSIGLKGRILIADEGINGTVSGDYETTQKYMDWVHSDERFADLWFKIDEENQQAFRKMFVRYKKEIVHLGLEDNNFDSDINPLETTGEYLNPKQFKEALLDEDTVVLDTRNDYEYDLGHFRGAIRPDIRNFRELPQWVRDNKDKFMEKRVVVYCTGGVRCEKFSGWLVREGFKDVGQLHGGIATYGKDPEVQGELWDGAMYVFDDRISVPINHVNPTVISKDYFDGTPCERYVNCANPFCNKQIFASEENETKYVRGCSPECRAHERNRYVQENGLSRQEWAERLEAIGESLPEFVGA</sequence>
<comment type="function">
    <text evidence="1">Catalyzes oxygen-dependent 5-hydroxyuridine (ho5U) modification at position 34 in tRNAs.</text>
</comment>
<comment type="catalytic activity">
    <reaction evidence="1">
        <text>uridine(34) in tRNA + AH2 + O2 = 5-hydroxyuridine(34) in tRNA + A + H2O</text>
        <dbReference type="Rhea" id="RHEA:64224"/>
        <dbReference type="Rhea" id="RHEA-COMP:11727"/>
        <dbReference type="Rhea" id="RHEA-COMP:13381"/>
        <dbReference type="ChEBI" id="CHEBI:13193"/>
        <dbReference type="ChEBI" id="CHEBI:15377"/>
        <dbReference type="ChEBI" id="CHEBI:15379"/>
        <dbReference type="ChEBI" id="CHEBI:17499"/>
        <dbReference type="ChEBI" id="CHEBI:65315"/>
        <dbReference type="ChEBI" id="CHEBI:136877"/>
    </reaction>
</comment>
<comment type="similarity">
    <text evidence="1">Belongs to the TrhO family.</text>
</comment>
<gene>
    <name evidence="1" type="primary">trhO</name>
    <name type="ordered locus">MGAS2096_Spy0789</name>
</gene>
<reference key="1">
    <citation type="journal article" date="2006" name="Proc. Natl. Acad. Sci. U.S.A.">
        <title>Molecular genetic anatomy of inter- and intraserotype variation in the human bacterial pathogen group A Streptococcus.</title>
        <authorList>
            <person name="Beres S.B."/>
            <person name="Richter E.W."/>
            <person name="Nagiec M.J."/>
            <person name="Sumby P."/>
            <person name="Porcella S.F."/>
            <person name="DeLeo F.R."/>
            <person name="Musser J.M."/>
        </authorList>
    </citation>
    <scope>NUCLEOTIDE SEQUENCE [LARGE SCALE GENOMIC DNA]</scope>
    <source>
        <strain>MGAS2096</strain>
    </source>
</reference>
<keyword id="KW-0560">Oxidoreductase</keyword>
<keyword id="KW-0819">tRNA processing</keyword>
<accession>Q1JC67</accession>
<name>TRHO_STRPB</name>
<proteinExistence type="inferred from homology"/>
<protein>
    <recommendedName>
        <fullName evidence="1">tRNA uridine(34) hydroxylase</fullName>
        <ecNumber evidence="1">1.14.-.-</ecNumber>
    </recommendedName>
    <alternativeName>
        <fullName evidence="1">tRNA hydroxylation protein O</fullName>
    </alternativeName>
</protein>
<evidence type="ECO:0000255" key="1">
    <source>
        <dbReference type="HAMAP-Rule" id="MF_00469"/>
    </source>
</evidence>
<feature type="chain" id="PRO_1000013784" description="tRNA uridine(34) hydroxylase">
    <location>
        <begin position="1"/>
        <end position="328"/>
    </location>
</feature>
<feature type="domain" description="Rhodanese" evidence="1">
    <location>
        <begin position="130"/>
        <end position="224"/>
    </location>
</feature>
<feature type="active site" description="Cysteine persulfide intermediate" evidence="1">
    <location>
        <position position="184"/>
    </location>
</feature>
<organism>
    <name type="scientific">Streptococcus pyogenes serotype M12 (strain MGAS2096)</name>
    <dbReference type="NCBI Taxonomy" id="370553"/>
    <lineage>
        <taxon>Bacteria</taxon>
        <taxon>Bacillati</taxon>
        <taxon>Bacillota</taxon>
        <taxon>Bacilli</taxon>
        <taxon>Lactobacillales</taxon>
        <taxon>Streptococcaceae</taxon>
        <taxon>Streptococcus</taxon>
    </lineage>
</organism>
<dbReference type="EC" id="1.14.-.-" evidence="1"/>
<dbReference type="EMBL" id="CP000261">
    <property type="protein sequence ID" value="ABF35841.1"/>
    <property type="molecule type" value="Genomic_DNA"/>
</dbReference>
<dbReference type="SMR" id="Q1JC67"/>
<dbReference type="KEGG" id="spj:MGAS2096_Spy0789"/>
<dbReference type="HOGENOM" id="CLU_038878_1_0_9"/>
<dbReference type="GO" id="GO:0016705">
    <property type="term" value="F:oxidoreductase activity, acting on paired donors, with incorporation or reduction of molecular oxygen"/>
    <property type="evidence" value="ECO:0007669"/>
    <property type="project" value="UniProtKB-UniRule"/>
</dbReference>
<dbReference type="GO" id="GO:0006400">
    <property type="term" value="P:tRNA modification"/>
    <property type="evidence" value="ECO:0007669"/>
    <property type="project" value="UniProtKB-UniRule"/>
</dbReference>
<dbReference type="CDD" id="cd01518">
    <property type="entry name" value="RHOD_YceA"/>
    <property type="match status" value="1"/>
</dbReference>
<dbReference type="Gene3D" id="3.30.70.100">
    <property type="match status" value="1"/>
</dbReference>
<dbReference type="Gene3D" id="3.40.250.10">
    <property type="entry name" value="Rhodanese-like domain"/>
    <property type="match status" value="1"/>
</dbReference>
<dbReference type="HAMAP" id="MF_00469">
    <property type="entry name" value="TrhO"/>
    <property type="match status" value="1"/>
</dbReference>
<dbReference type="InterPro" id="IPR001763">
    <property type="entry name" value="Rhodanese-like_dom"/>
</dbReference>
<dbReference type="InterPro" id="IPR036873">
    <property type="entry name" value="Rhodanese-like_dom_sf"/>
</dbReference>
<dbReference type="InterPro" id="IPR022111">
    <property type="entry name" value="Rhodanese_C"/>
</dbReference>
<dbReference type="InterPro" id="IPR020936">
    <property type="entry name" value="TrhO"/>
</dbReference>
<dbReference type="InterPro" id="IPR040503">
    <property type="entry name" value="TRHO_N"/>
</dbReference>
<dbReference type="NCBIfam" id="NF001135">
    <property type="entry name" value="PRK00142.1-3"/>
    <property type="match status" value="1"/>
</dbReference>
<dbReference type="NCBIfam" id="NF001137">
    <property type="entry name" value="PRK00142.1-5"/>
    <property type="match status" value="1"/>
</dbReference>
<dbReference type="PANTHER" id="PTHR43268:SF3">
    <property type="entry name" value="RHODANESE-LIKE DOMAIN-CONTAINING PROTEIN 7-RELATED"/>
    <property type="match status" value="1"/>
</dbReference>
<dbReference type="PANTHER" id="PTHR43268">
    <property type="entry name" value="THIOSULFATE SULFURTRANSFERASE/RHODANESE-LIKE DOMAIN-CONTAINING PROTEIN 2"/>
    <property type="match status" value="1"/>
</dbReference>
<dbReference type="Pfam" id="PF00581">
    <property type="entry name" value="Rhodanese"/>
    <property type="match status" value="1"/>
</dbReference>
<dbReference type="Pfam" id="PF12368">
    <property type="entry name" value="Rhodanese_C"/>
    <property type="match status" value="1"/>
</dbReference>
<dbReference type="Pfam" id="PF17773">
    <property type="entry name" value="UPF0176_N"/>
    <property type="match status" value="1"/>
</dbReference>
<dbReference type="SMART" id="SM00450">
    <property type="entry name" value="RHOD"/>
    <property type="match status" value="1"/>
</dbReference>
<dbReference type="SUPFAM" id="SSF52821">
    <property type="entry name" value="Rhodanese/Cell cycle control phosphatase"/>
    <property type="match status" value="1"/>
</dbReference>
<dbReference type="PROSITE" id="PS50206">
    <property type="entry name" value="RHODANESE_3"/>
    <property type="match status" value="1"/>
</dbReference>